<proteinExistence type="evidence at protein level"/>
<dbReference type="EC" id="3.6.5.3" evidence="2"/>
<dbReference type="EMBL" id="AJ719311">
    <property type="protein sequence ID" value="CAG30970.1"/>
    <property type="molecule type" value="mRNA"/>
</dbReference>
<dbReference type="RefSeq" id="NP_001006260.1">
    <property type="nucleotide sequence ID" value="NM_001006260.2"/>
</dbReference>
<dbReference type="SMR" id="Q5ZMS3"/>
<dbReference type="BioGRID" id="679807">
    <property type="interactions" value="1"/>
</dbReference>
<dbReference type="FunCoup" id="Q5ZMS3">
    <property type="interactions" value="1254"/>
</dbReference>
<dbReference type="STRING" id="9031.ENSGALP00000026307"/>
<dbReference type="PaxDb" id="9031-ENSGALP00000026307"/>
<dbReference type="GeneID" id="418597"/>
<dbReference type="KEGG" id="gga:418597"/>
<dbReference type="CTD" id="1968"/>
<dbReference type="VEuPathDB" id="HostDB:geneid_418597"/>
<dbReference type="eggNOG" id="KOG0466">
    <property type="taxonomic scope" value="Eukaryota"/>
</dbReference>
<dbReference type="InParanoid" id="Q5ZMS3"/>
<dbReference type="OrthoDB" id="1045173at2759"/>
<dbReference type="PhylomeDB" id="Q5ZMS3"/>
<dbReference type="PRO" id="PR:Q5ZMS3"/>
<dbReference type="Proteomes" id="UP000000539">
    <property type="component" value="Unassembled WGS sequence"/>
</dbReference>
<dbReference type="GO" id="GO:0005829">
    <property type="term" value="C:cytosol"/>
    <property type="evidence" value="ECO:0007669"/>
    <property type="project" value="UniProtKB-SubCell"/>
</dbReference>
<dbReference type="GO" id="GO:0005850">
    <property type="term" value="C:eukaryotic translation initiation factor 2 complex"/>
    <property type="evidence" value="ECO:0000250"/>
    <property type="project" value="UniProtKB"/>
</dbReference>
<dbReference type="GO" id="GO:0005525">
    <property type="term" value="F:GTP binding"/>
    <property type="evidence" value="ECO:0007669"/>
    <property type="project" value="UniProtKB-KW"/>
</dbReference>
<dbReference type="GO" id="GO:0003924">
    <property type="term" value="F:GTPase activity"/>
    <property type="evidence" value="ECO:0007669"/>
    <property type="project" value="InterPro"/>
</dbReference>
<dbReference type="GO" id="GO:1990856">
    <property type="term" value="F:methionyl-initiator methionine tRNA binding"/>
    <property type="evidence" value="ECO:0000250"/>
    <property type="project" value="UniProtKB"/>
</dbReference>
<dbReference type="GO" id="GO:0003743">
    <property type="term" value="F:translation initiation factor activity"/>
    <property type="evidence" value="ECO:0000318"/>
    <property type="project" value="GO_Central"/>
</dbReference>
<dbReference type="GO" id="GO:0002183">
    <property type="term" value="P:cytoplasmic translational initiation"/>
    <property type="evidence" value="ECO:0000250"/>
    <property type="project" value="UniProtKB"/>
</dbReference>
<dbReference type="GO" id="GO:0001731">
    <property type="term" value="P:formation of translation preinitiation complex"/>
    <property type="evidence" value="ECO:0000318"/>
    <property type="project" value="GO_Central"/>
</dbReference>
<dbReference type="CDD" id="cd01888">
    <property type="entry name" value="eIF2_gamma"/>
    <property type="match status" value="1"/>
</dbReference>
<dbReference type="CDD" id="cd03688">
    <property type="entry name" value="eIF2_gamma_II"/>
    <property type="match status" value="1"/>
</dbReference>
<dbReference type="CDD" id="cd15490">
    <property type="entry name" value="eIF2_gamma_III"/>
    <property type="match status" value="1"/>
</dbReference>
<dbReference type="FunFam" id="2.40.30.10:FF:000009">
    <property type="entry name" value="Eukaryotic translation initiation factor 2 subunit gamma"/>
    <property type="match status" value="1"/>
</dbReference>
<dbReference type="FunFam" id="2.40.30.10:FF:000011">
    <property type="entry name" value="Eukaryotic translation initiation factor 2 subunit gamma"/>
    <property type="match status" value="1"/>
</dbReference>
<dbReference type="FunFam" id="3.40.50.300:FF:000065">
    <property type="entry name" value="Eukaryotic translation initiation factor 2 subunit gamma"/>
    <property type="match status" value="1"/>
</dbReference>
<dbReference type="Gene3D" id="3.40.50.300">
    <property type="entry name" value="P-loop containing nucleotide triphosphate hydrolases"/>
    <property type="match status" value="1"/>
</dbReference>
<dbReference type="Gene3D" id="2.40.30.10">
    <property type="entry name" value="Translation factors"/>
    <property type="match status" value="2"/>
</dbReference>
<dbReference type="InterPro" id="IPR004161">
    <property type="entry name" value="EFTu-like_2"/>
</dbReference>
<dbReference type="InterPro" id="IPR050543">
    <property type="entry name" value="eIF2G"/>
</dbReference>
<dbReference type="InterPro" id="IPR015256">
    <property type="entry name" value="eIF2g_C"/>
</dbReference>
<dbReference type="InterPro" id="IPR044127">
    <property type="entry name" value="eIF2g_dom_2"/>
</dbReference>
<dbReference type="InterPro" id="IPR044128">
    <property type="entry name" value="eIF2g_GTP-bd"/>
</dbReference>
<dbReference type="InterPro" id="IPR027417">
    <property type="entry name" value="P-loop_NTPase"/>
</dbReference>
<dbReference type="InterPro" id="IPR000795">
    <property type="entry name" value="T_Tr_GTP-bd_dom"/>
</dbReference>
<dbReference type="InterPro" id="IPR009000">
    <property type="entry name" value="Transl_B-barrel_sf"/>
</dbReference>
<dbReference type="InterPro" id="IPR009001">
    <property type="entry name" value="Transl_elong_EF1A/Init_IF2_C"/>
</dbReference>
<dbReference type="NCBIfam" id="NF003077">
    <property type="entry name" value="PRK04000.1"/>
    <property type="match status" value="1"/>
</dbReference>
<dbReference type="PANTHER" id="PTHR42854">
    <property type="entry name" value="EUKARYOTIC TRANSLATION INITIATION FACTOR 2 SUBUNIT 3 FAMILY MEMBER"/>
    <property type="match status" value="1"/>
</dbReference>
<dbReference type="PANTHER" id="PTHR42854:SF3">
    <property type="entry name" value="EUKARYOTIC TRANSLATION INITIATION FACTOR 2 SUBUNIT 3-RELATED"/>
    <property type="match status" value="1"/>
</dbReference>
<dbReference type="Pfam" id="PF09173">
    <property type="entry name" value="eIF2_C"/>
    <property type="match status" value="1"/>
</dbReference>
<dbReference type="Pfam" id="PF00009">
    <property type="entry name" value="GTP_EFTU"/>
    <property type="match status" value="1"/>
</dbReference>
<dbReference type="Pfam" id="PF03144">
    <property type="entry name" value="GTP_EFTU_D2"/>
    <property type="match status" value="1"/>
</dbReference>
<dbReference type="PRINTS" id="PR00315">
    <property type="entry name" value="ELONGATNFCT"/>
</dbReference>
<dbReference type="SUPFAM" id="SSF50465">
    <property type="entry name" value="EF-Tu/eEF-1alpha/eIF2-gamma C-terminal domain"/>
    <property type="match status" value="1"/>
</dbReference>
<dbReference type="SUPFAM" id="SSF52540">
    <property type="entry name" value="P-loop containing nucleoside triphosphate hydrolases"/>
    <property type="match status" value="1"/>
</dbReference>
<dbReference type="SUPFAM" id="SSF50447">
    <property type="entry name" value="Translation proteins"/>
    <property type="match status" value="1"/>
</dbReference>
<dbReference type="PROSITE" id="PS51722">
    <property type="entry name" value="G_TR_2"/>
    <property type="match status" value="1"/>
</dbReference>
<comment type="function">
    <text evidence="1">Member of the eIF2 complex that functions in the early steps of protein synthesis by forming a ternary complex with GTP and initiator tRNA. This complex binds to a 40S ribosomal subunit, followed by mRNA binding to form the 43S pre-initiation complex (43S PIC). Junction of the 60S ribosomal subunit to form the 80S initiation complex is preceded by hydrolysis of the GTP bound to eIF2 and release of an eIF2-GDP binary complex. In order for eIF2 to recycle and catalyze another round of initiation, the GDP bound to eIF2 must exchange with GTP by way of a reaction catalyzed by eIF-2B (By similarity).</text>
</comment>
<comment type="catalytic activity">
    <reaction evidence="2">
        <text>GTP + H2O = GDP + phosphate + H(+)</text>
        <dbReference type="Rhea" id="RHEA:19669"/>
        <dbReference type="ChEBI" id="CHEBI:15377"/>
        <dbReference type="ChEBI" id="CHEBI:15378"/>
        <dbReference type="ChEBI" id="CHEBI:37565"/>
        <dbReference type="ChEBI" id="CHEBI:43474"/>
        <dbReference type="ChEBI" id="CHEBI:58189"/>
        <dbReference type="EC" id="3.6.5.3"/>
    </reaction>
</comment>
<comment type="subunit">
    <text evidence="3">Eukaryotic translation initiation factor 2 eIF2 is a heterotrimeric complex composed of an alpha (EIF2S1), a beta (EIF2S2) and a gamma (EIF2S3) chain. eIF2 is member of the 43S pre-initiation complex (43S PIC).</text>
</comment>
<comment type="subcellular location">
    <subcellularLocation>
        <location evidence="4">Cytoplasm</location>
        <location evidence="4">Cytosol</location>
    </subcellularLocation>
</comment>
<comment type="similarity">
    <text evidence="5">Belongs to the TRAFAC class translation factor GTPase superfamily. Classic translation factor GTPase family. EIF2G subfamily.</text>
</comment>
<organism>
    <name type="scientific">Gallus gallus</name>
    <name type="common">Chicken</name>
    <dbReference type="NCBI Taxonomy" id="9031"/>
    <lineage>
        <taxon>Eukaryota</taxon>
        <taxon>Metazoa</taxon>
        <taxon>Chordata</taxon>
        <taxon>Craniata</taxon>
        <taxon>Vertebrata</taxon>
        <taxon>Euteleostomi</taxon>
        <taxon>Archelosauria</taxon>
        <taxon>Archosauria</taxon>
        <taxon>Dinosauria</taxon>
        <taxon>Saurischia</taxon>
        <taxon>Theropoda</taxon>
        <taxon>Coelurosauria</taxon>
        <taxon>Aves</taxon>
        <taxon>Neognathae</taxon>
        <taxon>Galloanserae</taxon>
        <taxon>Galliformes</taxon>
        <taxon>Phasianidae</taxon>
        <taxon>Phasianinae</taxon>
        <taxon>Gallus</taxon>
    </lineage>
</organism>
<sequence length="472" mass="51076">MAGDEAGVTLGQPHLSRQDLATLDVTKLTPLSPEVISRQATINIGTIGHVAHGKSTVVKAISGVHTVRFKNELERNITIKLGYANAKIYKLDDPSCSRPECYRSCGSSTPDEFPTDIPGTKGNFKLVRHVSFVDCPGHDILMATMLNGAAVMDAALLLIAGNESCPQPQTSEHLAAIEIMKLKHILILQNKIDLVKESQAKEQYEQILAFVQGTVAEGAPIIPISAQLKYSIEVVCEYIVKKIPVPLRDFTSEPRLIVIRSFDVNKPGCEVDDLKGGVAGGSILKGVLKVGQEIEVRPGIVSKDSEGKLMCKPIFSKIVSLFAEHNDLQYAAPGGLIGVGTKIDPTLCRADRMVGQVLGAVGALPEIFTELEISYFLLRRLLGVRTEGDKKAAKVQKLSKNEVLMVNIGSLSTGGRVSAVKADLGKIVLTNPVCTEVGEKIALSRRVEKHWRLIGWGQIRRGVTIKPTVDDD</sequence>
<reference key="1">
    <citation type="journal article" date="2005" name="Genome Biol.">
        <title>Full-length cDNAs from chicken bursal lymphocytes to facilitate gene function analysis.</title>
        <authorList>
            <person name="Caldwell R.B."/>
            <person name="Kierzek A.M."/>
            <person name="Arakawa H."/>
            <person name="Bezzubov Y."/>
            <person name="Zaim J."/>
            <person name="Fiedler P."/>
            <person name="Kutter S."/>
            <person name="Blagodatski A."/>
            <person name="Kostovska D."/>
            <person name="Koter M."/>
            <person name="Plachy J."/>
            <person name="Carninci P."/>
            <person name="Hayashizaki Y."/>
            <person name="Buerstedde J.-M."/>
        </authorList>
    </citation>
    <scope>NUCLEOTIDE SEQUENCE [LARGE SCALE MRNA]</scope>
    <source>
        <strain>CB</strain>
        <tissue>Bursa of Fabricius</tissue>
    </source>
</reference>
<reference key="2">
    <citation type="submission" date="2007-01" db="UniProtKB">
        <authorList>
            <person name="Bienvenut W.V."/>
            <person name="Black E.J."/>
            <person name="Gillespie D.A."/>
        </authorList>
    </citation>
    <scope>PROTEIN SEQUENCE OF 2-38; 290-303; 398-416 AND 427-440</scope>
    <scope>CLEAVAGE OF INITIATOR METHIONINE</scope>
    <scope>ACETYLATION AT ALA-2</scope>
    <scope>IDENTIFICATION BY MASS SPECTROMETRY</scope>
    <source>
        <tissue>B-cell lymphoma</tissue>
    </source>
</reference>
<gene>
    <name type="primary">EIF2S3</name>
    <name type="ORF">RCJMB04_1f8</name>
</gene>
<keyword id="KW-0007">Acetylation</keyword>
<keyword id="KW-0963">Cytoplasm</keyword>
<keyword id="KW-0903">Direct protein sequencing</keyword>
<keyword id="KW-0342">GTP-binding</keyword>
<keyword id="KW-0378">Hydrolase</keyword>
<keyword id="KW-0396">Initiation factor</keyword>
<keyword id="KW-0547">Nucleotide-binding</keyword>
<keyword id="KW-0648">Protein biosynthesis</keyword>
<keyword id="KW-1185">Reference proteome</keyword>
<accession>Q5ZMS3</accession>
<evidence type="ECO:0000250" key="1">
    <source>
        <dbReference type="UniProtKB" id="P05198"/>
    </source>
</evidence>
<evidence type="ECO:0000250" key="2">
    <source>
        <dbReference type="UniProtKB" id="P32481"/>
    </source>
</evidence>
<evidence type="ECO:0000250" key="3">
    <source>
        <dbReference type="UniProtKB" id="P41091"/>
    </source>
</evidence>
<evidence type="ECO:0000250" key="4">
    <source>
        <dbReference type="UniProtKB" id="Q09130"/>
    </source>
</evidence>
<evidence type="ECO:0000255" key="5">
    <source>
        <dbReference type="PROSITE-ProRule" id="PRU01059"/>
    </source>
</evidence>
<evidence type="ECO:0000269" key="6">
    <source ref="2"/>
</evidence>
<protein>
    <recommendedName>
        <fullName>Eukaryotic translation initiation factor 2 subunit 3</fullName>
        <ecNumber evidence="2">3.6.5.3</ecNumber>
    </recommendedName>
    <alternativeName>
        <fullName>Eukaryotic translation initiation factor 2 subunit gamma</fullName>
        <shortName>eIF2-gamma</shortName>
    </alternativeName>
</protein>
<feature type="initiator methionine" description="Removed" evidence="6">
    <location>
        <position position="1"/>
    </location>
</feature>
<feature type="chain" id="PRO_0000280446" description="Eukaryotic translation initiation factor 2 subunit 3">
    <location>
        <begin position="2"/>
        <end position="472"/>
    </location>
</feature>
<feature type="domain" description="tr-type G" evidence="5">
    <location>
        <begin position="39"/>
        <end position="247"/>
    </location>
</feature>
<feature type="region of interest" description="G1" evidence="5">
    <location>
        <begin position="48"/>
        <end position="55"/>
    </location>
</feature>
<feature type="region of interest" description="G2" evidence="5">
    <location>
        <begin position="76"/>
        <end position="80"/>
    </location>
</feature>
<feature type="region of interest" description="G3" evidence="5">
    <location>
        <begin position="134"/>
        <end position="137"/>
    </location>
</feature>
<feature type="region of interest" description="G4" evidence="5">
    <location>
        <begin position="190"/>
        <end position="193"/>
    </location>
</feature>
<feature type="region of interest" description="G5" evidence="5">
    <location>
        <begin position="225"/>
        <end position="227"/>
    </location>
</feature>
<feature type="region of interest" description="Interacts with CDC123" evidence="3">
    <location>
        <begin position="457"/>
        <end position="469"/>
    </location>
</feature>
<feature type="binding site" evidence="2">
    <location>
        <begin position="51"/>
        <end position="56"/>
    </location>
    <ligand>
        <name>GTP</name>
        <dbReference type="ChEBI" id="CHEBI:37565"/>
    </ligand>
</feature>
<feature type="binding site" evidence="2">
    <location>
        <begin position="190"/>
        <end position="193"/>
    </location>
    <ligand>
        <name>GTP</name>
        <dbReference type="ChEBI" id="CHEBI:37565"/>
    </ligand>
</feature>
<feature type="binding site" evidence="2">
    <location>
        <begin position="225"/>
        <end position="227"/>
    </location>
    <ligand>
        <name>GTP</name>
        <dbReference type="ChEBI" id="CHEBI:37565"/>
    </ligand>
</feature>
<feature type="modified residue" description="N-acetylalanine; partial" evidence="6">
    <location>
        <position position="2"/>
    </location>
</feature>
<name>IF2G_CHICK</name>